<dbReference type="EMBL" id="AF182316">
    <property type="protein sequence ID" value="AAF27176.1"/>
    <property type="molecule type" value="mRNA"/>
</dbReference>
<dbReference type="EMBL" id="AF182317">
    <property type="protein sequence ID" value="AAF27177.1"/>
    <property type="molecule type" value="mRNA"/>
</dbReference>
<dbReference type="EMBL" id="AF207990">
    <property type="protein sequence ID" value="AAG23737.1"/>
    <property type="molecule type" value="mRNA"/>
</dbReference>
<dbReference type="EMBL" id="AB033033">
    <property type="protein sequence ID" value="BAA86521.2"/>
    <property type="molecule type" value="mRNA"/>
</dbReference>
<dbReference type="EMBL" id="AL360229">
    <property type="status" value="NOT_ANNOTATED_CDS"/>
    <property type="molecule type" value="Genomic_DNA"/>
</dbReference>
<dbReference type="EMBL" id="AL365364">
    <property type="status" value="NOT_ANNOTATED_CDS"/>
    <property type="molecule type" value="Genomic_DNA"/>
</dbReference>
<dbReference type="EMBL" id="BC040110">
    <property type="protein sequence ID" value="AAH40110.1"/>
    <property type="status" value="ALT_SEQ"/>
    <property type="molecule type" value="mRNA"/>
</dbReference>
<dbReference type="EMBL" id="BC052617">
    <property type="protein sequence ID" value="AAH52617.1"/>
    <property type="molecule type" value="mRNA"/>
</dbReference>
<dbReference type="EMBL" id="AL096713">
    <property type="protein sequence ID" value="CAB46370.1"/>
    <property type="molecule type" value="mRNA"/>
</dbReference>
<dbReference type="EMBL" id="AK075258">
    <property type="protein sequence ID" value="BAG52097.1"/>
    <property type="status" value="ALT_INIT"/>
    <property type="molecule type" value="mRNA"/>
</dbReference>
<dbReference type="CCDS" id="CCDS41550.1">
    <molecule id="Q9NZM1-6"/>
</dbReference>
<dbReference type="CCDS" id="CCDS41551.1">
    <molecule id="Q9NZM1-1"/>
</dbReference>
<dbReference type="PIR" id="T12449">
    <property type="entry name" value="T12449"/>
</dbReference>
<dbReference type="RefSeq" id="NP_038479.1">
    <molecule id="Q9NZM1-1"/>
    <property type="nucleotide sequence ID" value="NM_013451.4"/>
</dbReference>
<dbReference type="RefSeq" id="NP_579899.1">
    <molecule id="Q9NZM1-6"/>
    <property type="nucleotide sequence ID" value="NM_133337.3"/>
</dbReference>
<dbReference type="PDB" id="2DMH">
    <property type="method" value="NMR"/>
    <property type="chains" value="A=1-127"/>
</dbReference>
<dbReference type="PDB" id="2K2O">
    <property type="method" value="NMR"/>
    <property type="chains" value="A=923-1040"/>
</dbReference>
<dbReference type="PDB" id="6EEL">
    <property type="method" value="X-ray"/>
    <property type="resolution" value="1.93 A"/>
    <property type="chains" value="A/B/C=1-125"/>
</dbReference>
<dbReference type="PDBsum" id="2DMH"/>
<dbReference type="PDBsum" id="2K2O"/>
<dbReference type="PDBsum" id="6EEL"/>
<dbReference type="BMRB" id="Q9NZM1"/>
<dbReference type="SMR" id="Q9NZM1"/>
<dbReference type="BioGRID" id="117715">
    <property type="interactions" value="140"/>
</dbReference>
<dbReference type="FunCoup" id="Q9NZM1">
    <property type="interactions" value="954"/>
</dbReference>
<dbReference type="IntAct" id="Q9NZM1">
    <property type="interactions" value="72"/>
</dbReference>
<dbReference type="MINT" id="Q9NZM1"/>
<dbReference type="STRING" id="9606.ENSP00000352208"/>
<dbReference type="BindingDB" id="Q9NZM1"/>
<dbReference type="ChEMBL" id="CHEMBL4523476"/>
<dbReference type="TCDB" id="1.F.1.2.2">
    <property type="family name" value="the synaptosomal vesicle fusion pore (svf-pore) family"/>
</dbReference>
<dbReference type="GlyConnect" id="2941">
    <property type="glycosylation" value="1 N-Linked glycan (1 site)"/>
</dbReference>
<dbReference type="GlyCosmos" id="Q9NZM1">
    <property type="glycosylation" value="1 site, 1 glycan"/>
</dbReference>
<dbReference type="GlyGen" id="Q9NZM1">
    <property type="glycosylation" value="5 sites, 1 N-linked glycan (1 site), 1 O-linked glycan (4 sites)"/>
</dbReference>
<dbReference type="iPTMnet" id="Q9NZM1"/>
<dbReference type="MetOSite" id="Q9NZM1"/>
<dbReference type="PhosphoSitePlus" id="Q9NZM1"/>
<dbReference type="SwissPalm" id="Q9NZM1"/>
<dbReference type="BioMuta" id="MYOF"/>
<dbReference type="DMDM" id="20139241"/>
<dbReference type="CPTAC" id="CPTAC-545"/>
<dbReference type="CPTAC" id="CPTAC-546"/>
<dbReference type="jPOST" id="Q9NZM1"/>
<dbReference type="MassIVE" id="Q9NZM1"/>
<dbReference type="PaxDb" id="9606-ENSP00000352208"/>
<dbReference type="PeptideAtlas" id="Q9NZM1"/>
<dbReference type="ProteomicsDB" id="83437">
    <molecule id="Q9NZM1-1"/>
</dbReference>
<dbReference type="ProteomicsDB" id="83438">
    <molecule id="Q9NZM1-2"/>
</dbReference>
<dbReference type="ProteomicsDB" id="83439">
    <molecule id="Q9NZM1-3"/>
</dbReference>
<dbReference type="ProteomicsDB" id="83440">
    <molecule id="Q9NZM1-4"/>
</dbReference>
<dbReference type="ProteomicsDB" id="83441">
    <molecule id="Q9NZM1-5"/>
</dbReference>
<dbReference type="ProteomicsDB" id="83442">
    <molecule id="Q9NZM1-6"/>
</dbReference>
<dbReference type="ProteomicsDB" id="83443">
    <molecule id="Q9NZM1-7"/>
</dbReference>
<dbReference type="ProteomicsDB" id="83444">
    <molecule id="Q9NZM1-8"/>
</dbReference>
<dbReference type="Pumba" id="Q9NZM1"/>
<dbReference type="Antibodypedia" id="2467">
    <property type="antibodies" value="96 antibodies from 28 providers"/>
</dbReference>
<dbReference type="DNASU" id="26509"/>
<dbReference type="Ensembl" id="ENST00000358334.9">
    <molecule id="Q9NZM1-6"/>
    <property type="protein sequence ID" value="ENSP00000351094.5"/>
    <property type="gene ID" value="ENSG00000138119.17"/>
</dbReference>
<dbReference type="Ensembl" id="ENST00000359263.9">
    <molecule id="Q9NZM1-1"/>
    <property type="protein sequence ID" value="ENSP00000352208.4"/>
    <property type="gene ID" value="ENSG00000138119.17"/>
</dbReference>
<dbReference type="Ensembl" id="ENST00000371488.3">
    <molecule id="Q9NZM1-4"/>
    <property type="protein sequence ID" value="ENSP00000360543.3"/>
    <property type="gene ID" value="ENSG00000138119.17"/>
</dbReference>
<dbReference type="Ensembl" id="ENST00000371489.5">
    <molecule id="Q9NZM1-7"/>
    <property type="protein sequence ID" value="ENSP00000360544.1"/>
    <property type="gene ID" value="ENSG00000138119.17"/>
</dbReference>
<dbReference type="GeneID" id="26509"/>
<dbReference type="KEGG" id="hsa:26509"/>
<dbReference type="MANE-Select" id="ENST00000359263.9">
    <property type="protein sequence ID" value="ENSP00000352208.4"/>
    <property type="RefSeq nucleotide sequence ID" value="NM_013451.4"/>
    <property type="RefSeq protein sequence ID" value="NP_038479.1"/>
</dbReference>
<dbReference type="UCSC" id="uc001kin.4">
    <molecule id="Q9NZM1-1"/>
    <property type="organism name" value="human"/>
</dbReference>
<dbReference type="AGR" id="HGNC:3656"/>
<dbReference type="CTD" id="26509"/>
<dbReference type="DisGeNET" id="26509"/>
<dbReference type="GeneCards" id="MYOF"/>
<dbReference type="HGNC" id="HGNC:3656">
    <property type="gene designation" value="MYOF"/>
</dbReference>
<dbReference type="HPA" id="ENSG00000138119">
    <property type="expression patterns" value="Low tissue specificity"/>
</dbReference>
<dbReference type="MalaCards" id="MYOF"/>
<dbReference type="MIM" id="604603">
    <property type="type" value="gene"/>
</dbReference>
<dbReference type="MIM" id="619366">
    <property type="type" value="phenotype"/>
</dbReference>
<dbReference type="neXtProt" id="NX_Q9NZM1"/>
<dbReference type="OpenTargets" id="ENSG00000138119"/>
<dbReference type="Orphanet" id="599418">
    <property type="disease" value="Hereditary angioedema with normal C1Inh not related to F12 or PLG variant"/>
</dbReference>
<dbReference type="PharmGKB" id="PA164723288"/>
<dbReference type="VEuPathDB" id="HostDB:ENSG00000138119"/>
<dbReference type="eggNOG" id="KOG1326">
    <property type="taxonomic scope" value="Eukaryota"/>
</dbReference>
<dbReference type="GeneTree" id="ENSGT00940000154741"/>
<dbReference type="HOGENOM" id="CLU_001183_2_1_1"/>
<dbReference type="InParanoid" id="Q9NZM1"/>
<dbReference type="OMA" id="TCLEFRV"/>
<dbReference type="OrthoDB" id="270970at2759"/>
<dbReference type="PAN-GO" id="Q9NZM1">
    <property type="GO annotations" value="5 GO annotations based on evolutionary models"/>
</dbReference>
<dbReference type="PhylomeDB" id="Q9NZM1"/>
<dbReference type="TreeFam" id="TF316871"/>
<dbReference type="PathwayCommons" id="Q9NZM1"/>
<dbReference type="SignaLink" id="Q9NZM1"/>
<dbReference type="SIGNOR" id="Q9NZM1"/>
<dbReference type="BioGRID-ORCS" id="26509">
    <property type="hits" value="13 hits in 1152 CRISPR screens"/>
</dbReference>
<dbReference type="ChiTaRS" id="MYOF">
    <property type="organism name" value="human"/>
</dbReference>
<dbReference type="EvolutionaryTrace" id="Q9NZM1"/>
<dbReference type="GeneWiki" id="FER1L3"/>
<dbReference type="GenomeRNAi" id="26509"/>
<dbReference type="Pharos" id="Q9NZM1">
    <property type="development level" value="Tchem"/>
</dbReference>
<dbReference type="PRO" id="PR:Q9NZM1"/>
<dbReference type="Proteomes" id="UP000005640">
    <property type="component" value="Chromosome 10"/>
</dbReference>
<dbReference type="RNAct" id="Q9NZM1">
    <property type="molecule type" value="protein"/>
</dbReference>
<dbReference type="Bgee" id="ENSG00000138119">
    <property type="expression patterns" value="Expressed in skin of hip and 202 other cell types or tissues"/>
</dbReference>
<dbReference type="ExpressionAtlas" id="Q9NZM1">
    <property type="expression patterns" value="baseline and differential"/>
</dbReference>
<dbReference type="GO" id="GO:0005901">
    <property type="term" value="C:caveola"/>
    <property type="evidence" value="ECO:0000250"/>
    <property type="project" value="UniProtKB"/>
</dbReference>
<dbReference type="GO" id="GO:0034451">
    <property type="term" value="C:centriolar satellite"/>
    <property type="evidence" value="ECO:0000314"/>
    <property type="project" value="HPA"/>
</dbReference>
<dbReference type="GO" id="GO:0036064">
    <property type="term" value="C:ciliary basal body"/>
    <property type="evidence" value="ECO:0000314"/>
    <property type="project" value="HPA"/>
</dbReference>
<dbReference type="GO" id="GO:0005929">
    <property type="term" value="C:cilium"/>
    <property type="evidence" value="ECO:0000314"/>
    <property type="project" value="HPA"/>
</dbReference>
<dbReference type="GO" id="GO:0031410">
    <property type="term" value="C:cytoplasmic vesicle"/>
    <property type="evidence" value="ECO:0000314"/>
    <property type="project" value="UniProtKB"/>
</dbReference>
<dbReference type="GO" id="GO:0070062">
    <property type="term" value="C:extracellular exosome"/>
    <property type="evidence" value="ECO:0007005"/>
    <property type="project" value="UniProtKB"/>
</dbReference>
<dbReference type="GO" id="GO:0043231">
    <property type="term" value="C:intracellular membrane-bounded organelle"/>
    <property type="evidence" value="ECO:0000314"/>
    <property type="project" value="HPA"/>
</dbReference>
<dbReference type="GO" id="GO:0005635">
    <property type="term" value="C:nuclear envelope"/>
    <property type="evidence" value="ECO:0000304"/>
    <property type="project" value="ProtInc"/>
</dbReference>
<dbReference type="GO" id="GO:0031965">
    <property type="term" value="C:nuclear membrane"/>
    <property type="evidence" value="ECO:0007669"/>
    <property type="project" value="UniProtKB-SubCell"/>
</dbReference>
<dbReference type="GO" id="GO:0005886">
    <property type="term" value="C:plasma membrane"/>
    <property type="evidence" value="ECO:0000314"/>
    <property type="project" value="HPA"/>
</dbReference>
<dbReference type="GO" id="GO:0030672">
    <property type="term" value="C:synaptic vesicle membrane"/>
    <property type="evidence" value="ECO:0000318"/>
    <property type="project" value="GO_Central"/>
</dbReference>
<dbReference type="GO" id="GO:0005509">
    <property type="term" value="F:calcium ion binding"/>
    <property type="evidence" value="ECO:0000318"/>
    <property type="project" value="GO_Central"/>
</dbReference>
<dbReference type="GO" id="GO:0005543">
    <property type="term" value="F:phospholipid binding"/>
    <property type="evidence" value="ECO:0000314"/>
    <property type="project" value="UniProtKB"/>
</dbReference>
<dbReference type="GO" id="GO:0008015">
    <property type="term" value="P:blood circulation"/>
    <property type="evidence" value="ECO:0000304"/>
    <property type="project" value="ProtInc"/>
</dbReference>
<dbReference type="GO" id="GO:0006936">
    <property type="term" value="P:muscle contraction"/>
    <property type="evidence" value="ECO:0000304"/>
    <property type="project" value="ProtInc"/>
</dbReference>
<dbReference type="GO" id="GO:0001778">
    <property type="term" value="P:plasma membrane repair"/>
    <property type="evidence" value="ECO:0000250"/>
    <property type="project" value="UniProtKB"/>
</dbReference>
<dbReference type="GO" id="GO:0046928">
    <property type="term" value="P:regulation of neurotransmitter secretion"/>
    <property type="evidence" value="ECO:0000318"/>
    <property type="project" value="GO_Central"/>
</dbReference>
<dbReference type="CDD" id="cd08373">
    <property type="entry name" value="C2A_Ferlin"/>
    <property type="match status" value="1"/>
</dbReference>
<dbReference type="CDD" id="cd04011">
    <property type="entry name" value="C2B_Ferlin"/>
    <property type="match status" value="1"/>
</dbReference>
<dbReference type="CDD" id="cd04018">
    <property type="entry name" value="C2C_Ferlin"/>
    <property type="match status" value="1"/>
</dbReference>
<dbReference type="CDD" id="cd04017">
    <property type="entry name" value="C2D_Ferlin"/>
    <property type="match status" value="1"/>
</dbReference>
<dbReference type="CDD" id="cd04037">
    <property type="entry name" value="C2E_Ferlin"/>
    <property type="match status" value="1"/>
</dbReference>
<dbReference type="CDD" id="cd08374">
    <property type="entry name" value="C2F_Ferlin"/>
    <property type="match status" value="1"/>
</dbReference>
<dbReference type="FunFam" id="2.60.40.150:FF:000009">
    <property type="entry name" value="dysferlin isoform X2"/>
    <property type="match status" value="1"/>
</dbReference>
<dbReference type="FunFam" id="2.60.40.150:FF:000021">
    <property type="entry name" value="dysferlin isoform X2"/>
    <property type="match status" value="1"/>
</dbReference>
<dbReference type="FunFam" id="2.60.40.150:FF:000026">
    <property type="entry name" value="dysferlin isoform X2"/>
    <property type="match status" value="1"/>
</dbReference>
<dbReference type="FunFam" id="2.60.40.150:FF:000033">
    <property type="entry name" value="dysferlin isoform X2"/>
    <property type="match status" value="1"/>
</dbReference>
<dbReference type="FunFam" id="2.60.40.150:FF:000037">
    <property type="entry name" value="dysferlin isoform X2"/>
    <property type="match status" value="1"/>
</dbReference>
<dbReference type="FunFam" id="2.60.40.150:FF:000095">
    <property type="entry name" value="myoferlin isoform X2"/>
    <property type="match status" value="1"/>
</dbReference>
<dbReference type="Gene3D" id="2.60.40.150">
    <property type="entry name" value="C2 domain"/>
    <property type="match status" value="6"/>
</dbReference>
<dbReference type="InterPro" id="IPR000008">
    <property type="entry name" value="C2_dom"/>
</dbReference>
<dbReference type="InterPro" id="IPR035892">
    <property type="entry name" value="C2_domain_sf"/>
</dbReference>
<dbReference type="InterPro" id="IPR037726">
    <property type="entry name" value="C2A_Ferlin"/>
</dbReference>
<dbReference type="InterPro" id="IPR037720">
    <property type="entry name" value="C2B_Ferlin"/>
</dbReference>
<dbReference type="InterPro" id="IPR037722">
    <property type="entry name" value="C2C_Ferlin"/>
</dbReference>
<dbReference type="InterPro" id="IPR037723">
    <property type="entry name" value="C2D_Ferlin"/>
</dbReference>
<dbReference type="InterPro" id="IPR037724">
    <property type="entry name" value="C2E_Ferlin"/>
</dbReference>
<dbReference type="InterPro" id="IPR037725">
    <property type="entry name" value="C2F_Ferlin"/>
</dbReference>
<dbReference type="InterPro" id="IPR012968">
    <property type="entry name" value="FerIin_dom"/>
</dbReference>
<dbReference type="InterPro" id="IPR037721">
    <property type="entry name" value="Ferlin"/>
</dbReference>
<dbReference type="InterPro" id="IPR012560">
    <property type="entry name" value="Ferlin_A-domain"/>
</dbReference>
<dbReference type="InterPro" id="IPR012561">
    <property type="entry name" value="Ferlin_B-domain"/>
</dbReference>
<dbReference type="InterPro" id="IPR032362">
    <property type="entry name" value="Ferlin_C"/>
</dbReference>
<dbReference type="InterPro" id="IPR055072">
    <property type="entry name" value="Ferlin_DSRM"/>
</dbReference>
<dbReference type="InterPro" id="IPR006614">
    <property type="entry name" value="Peroxin/Ferlin"/>
</dbReference>
<dbReference type="PANTHER" id="PTHR12546">
    <property type="entry name" value="FER-1-LIKE"/>
    <property type="match status" value="1"/>
</dbReference>
<dbReference type="PANTHER" id="PTHR12546:SF33">
    <property type="entry name" value="SPERM VESICLE FUSION PROTEIN FER-1"/>
    <property type="match status" value="1"/>
</dbReference>
<dbReference type="Pfam" id="PF00168">
    <property type="entry name" value="C2"/>
    <property type="match status" value="7"/>
</dbReference>
<dbReference type="Pfam" id="PF22901">
    <property type="entry name" value="dsrm_Ferlin"/>
    <property type="match status" value="1"/>
</dbReference>
<dbReference type="Pfam" id="PF08165">
    <property type="entry name" value="FerA"/>
    <property type="match status" value="1"/>
</dbReference>
<dbReference type="Pfam" id="PF08150">
    <property type="entry name" value="FerB"/>
    <property type="match status" value="1"/>
</dbReference>
<dbReference type="Pfam" id="PF08151">
    <property type="entry name" value="FerI"/>
    <property type="match status" value="1"/>
</dbReference>
<dbReference type="Pfam" id="PF16165">
    <property type="entry name" value="Ferlin_C"/>
    <property type="match status" value="1"/>
</dbReference>
<dbReference type="SMART" id="SM00239">
    <property type="entry name" value="C2"/>
    <property type="match status" value="7"/>
</dbReference>
<dbReference type="SMART" id="SM00694">
    <property type="entry name" value="DysFC"/>
    <property type="match status" value="2"/>
</dbReference>
<dbReference type="SMART" id="SM00693">
    <property type="entry name" value="DysFN"/>
    <property type="match status" value="2"/>
</dbReference>
<dbReference type="SMART" id="SM01200">
    <property type="entry name" value="FerA"/>
    <property type="match status" value="1"/>
</dbReference>
<dbReference type="SMART" id="SM01201">
    <property type="entry name" value="FerB"/>
    <property type="match status" value="1"/>
</dbReference>
<dbReference type="SMART" id="SM01202">
    <property type="entry name" value="FerI"/>
    <property type="match status" value="1"/>
</dbReference>
<dbReference type="SUPFAM" id="SSF49562">
    <property type="entry name" value="C2 domain (Calcium/lipid-binding domain, CaLB)"/>
    <property type="match status" value="7"/>
</dbReference>
<dbReference type="PROSITE" id="PS50004">
    <property type="entry name" value="C2"/>
    <property type="match status" value="7"/>
</dbReference>
<reference key="1">
    <citation type="journal article" date="2000" name="Hum. Mol. Genet.">
        <title>Myoferlin, a candidate gene and potential modifier of muscular dystrophy.</title>
        <authorList>
            <person name="Davis D.B."/>
            <person name="Delmonte A.J."/>
            <person name="Ly C.T."/>
            <person name="McNally E.M."/>
        </authorList>
    </citation>
    <scope>NUCLEOTIDE SEQUENCE [MRNA] (ISOFORMS 1 AND 2)</scope>
    <source>
        <tissue>Heart</tissue>
        <tissue>Lung</tissue>
    </source>
</reference>
<reference key="2">
    <citation type="journal article" date="2000" name="Genomics">
        <title>The third human FER-1-like protein is highly similar to dysferlin.</title>
        <authorList>
            <person name="Britton S."/>
            <person name="Freeman T."/>
            <person name="Vafiadaki E."/>
            <person name="Keers S."/>
            <person name="Harrison R."/>
            <person name="Bushby K.M.D."/>
            <person name="Bashir R."/>
        </authorList>
    </citation>
    <scope>NUCLEOTIDE SEQUENCE [MRNA] (ISOFORM 6)</scope>
    <scope>ALTERNATIVE SPLICING</scope>
    <source>
        <tissue>Placenta</tissue>
    </source>
</reference>
<reference key="3">
    <citation type="journal article" date="1999" name="DNA Res.">
        <title>Prediction of the coding sequences of unidentified human genes. XV. The complete sequences of 100 new cDNA clones from brain which code for large proteins in vitro.</title>
        <authorList>
            <person name="Nagase T."/>
            <person name="Ishikawa K."/>
            <person name="Kikuno R."/>
            <person name="Hirosawa M."/>
            <person name="Nomura N."/>
            <person name="Ohara O."/>
        </authorList>
    </citation>
    <scope>NUCLEOTIDE SEQUENCE [LARGE SCALE MRNA] (ISOFORM 1)</scope>
    <source>
        <tissue>Brain</tissue>
    </source>
</reference>
<reference key="4">
    <citation type="journal article" date="2002" name="DNA Res.">
        <title>Construction of expression-ready cDNA clones for KIAA genes: manual curation of 330 KIAA cDNA clones.</title>
        <authorList>
            <person name="Nakajima D."/>
            <person name="Okazaki N."/>
            <person name="Yamakawa H."/>
            <person name="Kikuno R."/>
            <person name="Ohara O."/>
            <person name="Nagase T."/>
        </authorList>
    </citation>
    <scope>SEQUENCE REVISION</scope>
</reference>
<reference key="5">
    <citation type="journal article" date="2004" name="Nature">
        <title>The DNA sequence and comparative analysis of human chromosome 10.</title>
        <authorList>
            <person name="Deloukas P."/>
            <person name="Earthrowl M.E."/>
            <person name="Grafham D.V."/>
            <person name="Rubenfield M."/>
            <person name="French L."/>
            <person name="Steward C.A."/>
            <person name="Sims S.K."/>
            <person name="Jones M.C."/>
            <person name="Searle S."/>
            <person name="Scott C."/>
            <person name="Howe K."/>
            <person name="Hunt S.E."/>
            <person name="Andrews T.D."/>
            <person name="Gilbert J.G.R."/>
            <person name="Swarbreck D."/>
            <person name="Ashurst J.L."/>
            <person name="Taylor A."/>
            <person name="Battles J."/>
            <person name="Bird C.P."/>
            <person name="Ainscough R."/>
            <person name="Almeida J.P."/>
            <person name="Ashwell R.I.S."/>
            <person name="Ambrose K.D."/>
            <person name="Babbage A.K."/>
            <person name="Bagguley C.L."/>
            <person name="Bailey J."/>
            <person name="Banerjee R."/>
            <person name="Bates K."/>
            <person name="Beasley H."/>
            <person name="Bray-Allen S."/>
            <person name="Brown A.J."/>
            <person name="Brown J.Y."/>
            <person name="Burford D.C."/>
            <person name="Burrill W."/>
            <person name="Burton J."/>
            <person name="Cahill P."/>
            <person name="Camire D."/>
            <person name="Carter N.P."/>
            <person name="Chapman J.C."/>
            <person name="Clark S.Y."/>
            <person name="Clarke G."/>
            <person name="Clee C.M."/>
            <person name="Clegg S."/>
            <person name="Corby N."/>
            <person name="Coulson A."/>
            <person name="Dhami P."/>
            <person name="Dutta I."/>
            <person name="Dunn M."/>
            <person name="Faulkner L."/>
            <person name="Frankish A."/>
            <person name="Frankland J.A."/>
            <person name="Garner P."/>
            <person name="Garnett J."/>
            <person name="Gribble S."/>
            <person name="Griffiths C."/>
            <person name="Grocock R."/>
            <person name="Gustafson E."/>
            <person name="Hammond S."/>
            <person name="Harley J.L."/>
            <person name="Hart E."/>
            <person name="Heath P.D."/>
            <person name="Ho T.P."/>
            <person name="Hopkins B."/>
            <person name="Horne J."/>
            <person name="Howden P.J."/>
            <person name="Huckle E."/>
            <person name="Hynds C."/>
            <person name="Johnson C."/>
            <person name="Johnson D."/>
            <person name="Kana A."/>
            <person name="Kay M."/>
            <person name="Kimberley A.M."/>
            <person name="Kershaw J.K."/>
            <person name="Kokkinaki M."/>
            <person name="Laird G.K."/>
            <person name="Lawlor S."/>
            <person name="Lee H.M."/>
            <person name="Leongamornlert D.A."/>
            <person name="Laird G."/>
            <person name="Lloyd C."/>
            <person name="Lloyd D.M."/>
            <person name="Loveland J."/>
            <person name="Lovell J."/>
            <person name="McLaren S."/>
            <person name="McLay K.E."/>
            <person name="McMurray A."/>
            <person name="Mashreghi-Mohammadi M."/>
            <person name="Matthews L."/>
            <person name="Milne S."/>
            <person name="Nickerson T."/>
            <person name="Nguyen M."/>
            <person name="Overton-Larty E."/>
            <person name="Palmer S.A."/>
            <person name="Pearce A.V."/>
            <person name="Peck A.I."/>
            <person name="Pelan S."/>
            <person name="Phillimore B."/>
            <person name="Porter K."/>
            <person name="Rice C.M."/>
            <person name="Rogosin A."/>
            <person name="Ross M.T."/>
            <person name="Sarafidou T."/>
            <person name="Sehra H.K."/>
            <person name="Shownkeen R."/>
            <person name="Skuce C.D."/>
            <person name="Smith M."/>
            <person name="Standring L."/>
            <person name="Sycamore N."/>
            <person name="Tester J."/>
            <person name="Thorpe A."/>
            <person name="Torcasso W."/>
            <person name="Tracey A."/>
            <person name="Tromans A."/>
            <person name="Tsolas J."/>
            <person name="Wall M."/>
            <person name="Walsh J."/>
            <person name="Wang H."/>
            <person name="Weinstock K."/>
            <person name="West A.P."/>
            <person name="Willey D.L."/>
            <person name="Whitehead S.L."/>
            <person name="Wilming L."/>
            <person name="Wray P.W."/>
            <person name="Young L."/>
            <person name="Chen Y."/>
            <person name="Lovering R.C."/>
            <person name="Moschonas N.K."/>
            <person name="Siebert R."/>
            <person name="Fechtel K."/>
            <person name="Bentley D."/>
            <person name="Durbin R.M."/>
            <person name="Hubbard T."/>
            <person name="Doucette-Stamm L."/>
            <person name="Beck S."/>
            <person name="Smith D.R."/>
            <person name="Rogers J."/>
        </authorList>
    </citation>
    <scope>NUCLEOTIDE SEQUENCE [LARGE SCALE GENOMIC DNA]</scope>
</reference>
<reference key="6">
    <citation type="journal article" date="2004" name="Genome Res.">
        <title>The status, quality, and expansion of the NIH full-length cDNA project: the Mammalian Gene Collection (MGC).</title>
        <authorList>
            <consortium name="The MGC Project Team"/>
        </authorList>
    </citation>
    <scope>NUCLEOTIDE SEQUENCE [LARGE SCALE MRNA] (ISOFORMS 5 AND 8)</scope>
    <source>
        <tissue>Lung</tissue>
    </source>
</reference>
<reference key="7">
    <citation type="journal article" date="2007" name="BMC Genomics">
        <title>The full-ORF clone resource of the German cDNA consortium.</title>
        <authorList>
            <person name="Bechtel S."/>
            <person name="Rosenfelder H."/>
            <person name="Duda A."/>
            <person name="Schmidt C.P."/>
            <person name="Ernst U."/>
            <person name="Wellenreuther R."/>
            <person name="Mehrle A."/>
            <person name="Schuster C."/>
            <person name="Bahr A."/>
            <person name="Bloecker H."/>
            <person name="Heubner D."/>
            <person name="Hoerlein A."/>
            <person name="Michel G."/>
            <person name="Wedler H."/>
            <person name="Koehrer K."/>
            <person name="Ottenwaelder B."/>
            <person name="Poustka A."/>
            <person name="Wiemann S."/>
            <person name="Schupp I."/>
        </authorList>
    </citation>
    <scope>NUCLEOTIDE SEQUENCE [LARGE SCALE MRNA] OF 621-2061 (ISOFORM 3)</scope>
    <source>
        <tissue>Fetal brain</tissue>
    </source>
</reference>
<reference key="8">
    <citation type="journal article" date="2004" name="Nat. Genet.">
        <title>Complete sequencing and characterization of 21,243 full-length human cDNAs.</title>
        <authorList>
            <person name="Ota T."/>
            <person name="Suzuki Y."/>
            <person name="Nishikawa T."/>
            <person name="Otsuki T."/>
            <person name="Sugiyama T."/>
            <person name="Irie R."/>
            <person name="Wakamatsu A."/>
            <person name="Hayashi K."/>
            <person name="Sato H."/>
            <person name="Nagai K."/>
            <person name="Kimura K."/>
            <person name="Makita H."/>
            <person name="Sekine M."/>
            <person name="Obayashi M."/>
            <person name="Nishi T."/>
            <person name="Shibahara T."/>
            <person name="Tanaka T."/>
            <person name="Ishii S."/>
            <person name="Yamamoto J."/>
            <person name="Saito K."/>
            <person name="Kawai Y."/>
            <person name="Isono Y."/>
            <person name="Nakamura Y."/>
            <person name="Nagahari K."/>
            <person name="Murakami K."/>
            <person name="Yasuda T."/>
            <person name="Iwayanagi T."/>
            <person name="Wagatsuma M."/>
            <person name="Shiratori A."/>
            <person name="Sudo H."/>
            <person name="Hosoiri T."/>
            <person name="Kaku Y."/>
            <person name="Kodaira H."/>
            <person name="Kondo H."/>
            <person name="Sugawara M."/>
            <person name="Takahashi M."/>
            <person name="Kanda K."/>
            <person name="Yokoi T."/>
            <person name="Furuya T."/>
            <person name="Kikkawa E."/>
            <person name="Omura Y."/>
            <person name="Abe K."/>
            <person name="Kamihara K."/>
            <person name="Katsuta N."/>
            <person name="Sato K."/>
            <person name="Tanikawa M."/>
            <person name="Yamazaki M."/>
            <person name="Ninomiya K."/>
            <person name="Ishibashi T."/>
            <person name="Yamashita H."/>
            <person name="Murakawa K."/>
            <person name="Fujimori K."/>
            <person name="Tanai H."/>
            <person name="Kimata M."/>
            <person name="Watanabe M."/>
            <person name="Hiraoka S."/>
            <person name="Chiba Y."/>
            <person name="Ishida S."/>
            <person name="Ono Y."/>
            <person name="Takiguchi S."/>
            <person name="Watanabe S."/>
            <person name="Yosida M."/>
            <person name="Hotuta T."/>
            <person name="Kusano J."/>
            <person name="Kanehori K."/>
            <person name="Takahashi-Fujii A."/>
            <person name="Hara H."/>
            <person name="Tanase T.-O."/>
            <person name="Nomura Y."/>
            <person name="Togiya S."/>
            <person name="Komai F."/>
            <person name="Hara R."/>
            <person name="Takeuchi K."/>
            <person name="Arita M."/>
            <person name="Imose N."/>
            <person name="Musashino K."/>
            <person name="Yuuki H."/>
            <person name="Oshima A."/>
            <person name="Sasaki N."/>
            <person name="Aotsuka S."/>
            <person name="Yoshikawa Y."/>
            <person name="Matsunawa H."/>
            <person name="Ichihara T."/>
            <person name="Shiohata N."/>
            <person name="Sano S."/>
            <person name="Moriya S."/>
            <person name="Momiyama H."/>
            <person name="Satoh N."/>
            <person name="Takami S."/>
            <person name="Terashima Y."/>
            <person name="Suzuki O."/>
            <person name="Nakagawa S."/>
            <person name="Senoh A."/>
            <person name="Mizoguchi H."/>
            <person name="Goto Y."/>
            <person name="Shimizu F."/>
            <person name="Wakebe H."/>
            <person name="Hishigaki H."/>
            <person name="Watanabe T."/>
            <person name="Sugiyama A."/>
            <person name="Takemoto M."/>
            <person name="Kawakami B."/>
            <person name="Yamazaki M."/>
            <person name="Watanabe K."/>
            <person name="Kumagai A."/>
            <person name="Itakura S."/>
            <person name="Fukuzumi Y."/>
            <person name="Fujimori Y."/>
            <person name="Komiyama M."/>
            <person name="Tashiro H."/>
            <person name="Tanigami A."/>
            <person name="Fujiwara T."/>
            <person name="Ono T."/>
            <person name="Yamada K."/>
            <person name="Fujii Y."/>
            <person name="Ozaki K."/>
            <person name="Hirao M."/>
            <person name="Ohmori Y."/>
            <person name="Kawabata A."/>
            <person name="Hikiji T."/>
            <person name="Kobatake N."/>
            <person name="Inagaki H."/>
            <person name="Ikema Y."/>
            <person name="Okamoto S."/>
            <person name="Okitani R."/>
            <person name="Kawakami T."/>
            <person name="Noguchi S."/>
            <person name="Itoh T."/>
            <person name="Shigeta K."/>
            <person name="Senba T."/>
            <person name="Matsumura K."/>
            <person name="Nakajima Y."/>
            <person name="Mizuno T."/>
            <person name="Morinaga M."/>
            <person name="Sasaki M."/>
            <person name="Togashi T."/>
            <person name="Oyama M."/>
            <person name="Hata H."/>
            <person name="Watanabe M."/>
            <person name="Komatsu T."/>
            <person name="Mizushima-Sugano J."/>
            <person name="Satoh T."/>
            <person name="Shirai Y."/>
            <person name="Takahashi Y."/>
            <person name="Nakagawa K."/>
            <person name="Okumura K."/>
            <person name="Nagase T."/>
            <person name="Nomura N."/>
            <person name="Kikuchi H."/>
            <person name="Masuho Y."/>
            <person name="Yamashita R."/>
            <person name="Nakai K."/>
            <person name="Yada T."/>
            <person name="Nakamura Y."/>
            <person name="Ohara O."/>
            <person name="Isogai T."/>
            <person name="Sugano S."/>
        </authorList>
    </citation>
    <scope>NUCLEOTIDE SEQUENCE [LARGE SCALE MRNA] OF 1389-2061 (ISOFORMS 1/2)</scope>
    <source>
        <tissue>Thyroid</tissue>
    </source>
</reference>
<reference key="9">
    <citation type="journal article" date="2002" name="J. Biol. Chem.">
        <title>Calcium-sensitive phospholipid binding properties of normal and mutant ferlin C2 domains.</title>
        <authorList>
            <person name="Davis D.B."/>
            <person name="Doherty K.R."/>
            <person name="Delmonte A.J."/>
            <person name="McNally E.M."/>
        </authorList>
    </citation>
    <scope>SUBCELLULAR LOCATION</scope>
    <scope>TISSUE SPECIFICITY</scope>
</reference>
<reference key="10">
    <citation type="journal article" date="2007" name="J. Biol. Chem.">
        <title>Myoferlin regulates vascular endothelial growth factor receptor-2 stability and function.</title>
        <authorList>
            <person name="Bernatchez P.N."/>
            <person name="Acevedo L."/>
            <person name="Fernandez-Hernando C."/>
            <person name="Murata T."/>
            <person name="Chalouni C."/>
            <person name="Kim J."/>
            <person name="Erdjument-Bromage H."/>
            <person name="Shah V."/>
            <person name="Gratton J.-P."/>
            <person name="McNally E.M."/>
            <person name="Tempst P."/>
            <person name="Sessa W.C."/>
        </authorList>
    </citation>
    <scope>TISSUE SPECIFICITY</scope>
</reference>
<reference key="11">
    <citation type="journal article" date="2008" name="J. Biol. Chem.">
        <title>The endocytic recycling protein EHD2 interacts with myoferlin to regulate myoblast fusion.</title>
        <authorList>
            <person name="Doherty K.R."/>
            <person name="Demonbreun A.R."/>
            <person name="Wallace G.Q."/>
            <person name="Cave A."/>
            <person name="Posey A.D."/>
            <person name="Heretis K."/>
            <person name="Pytel P."/>
            <person name="McNally E.M."/>
        </authorList>
    </citation>
    <scope>INTERACTION WITH EHD2</scope>
    <scope>MUTAGENESIS OF 238-ASN--PHE-240</scope>
    <scope>SUBCELLULAR LOCATION</scope>
    <scope>TISSUE SPECIFICITY</scope>
    <scope>IDENTIFICATION BY MASS SPECTROMETRY</scope>
</reference>
<reference key="12">
    <citation type="journal article" date="2008" name="Proc. Natl. Acad. Sci. U.S.A.">
        <title>A quantitative atlas of mitotic phosphorylation.</title>
        <authorList>
            <person name="Dephoure N."/>
            <person name="Zhou C."/>
            <person name="Villen J."/>
            <person name="Beausoleil S.A."/>
            <person name="Bakalarski C.E."/>
            <person name="Elledge S.J."/>
            <person name="Gygi S.P."/>
        </authorList>
    </citation>
    <scope>PHOSPHORYLATION [LARGE SCALE ANALYSIS] AT SER-174</scope>
    <scope>IDENTIFICATION BY MASS SPECTROMETRY [LARGE SCALE ANALYSIS]</scope>
    <source>
        <tissue>Cervix carcinoma</tissue>
    </source>
</reference>
<reference key="13">
    <citation type="journal article" date="2009" name="Science">
        <title>Lysine acetylation targets protein complexes and co-regulates major cellular functions.</title>
        <authorList>
            <person name="Choudhary C."/>
            <person name="Kumar C."/>
            <person name="Gnad F."/>
            <person name="Nielsen M.L."/>
            <person name="Rehman M."/>
            <person name="Walther T.C."/>
            <person name="Olsen J.V."/>
            <person name="Mann M."/>
        </authorList>
    </citation>
    <scope>ACETYLATION [LARGE SCALE ANALYSIS] AT LYS-884</scope>
    <scope>IDENTIFICATION BY MASS SPECTROMETRY [LARGE SCALE ANALYSIS]</scope>
</reference>
<reference key="14">
    <citation type="journal article" date="2010" name="Sci. Signal.">
        <title>Quantitative phosphoproteomics reveals widespread full phosphorylation site occupancy during mitosis.</title>
        <authorList>
            <person name="Olsen J.V."/>
            <person name="Vermeulen M."/>
            <person name="Santamaria A."/>
            <person name="Kumar C."/>
            <person name="Miller M.L."/>
            <person name="Jensen L.J."/>
            <person name="Gnad F."/>
            <person name="Cox J."/>
            <person name="Jensen T.S."/>
            <person name="Nigg E.A."/>
            <person name="Brunak S."/>
            <person name="Mann M."/>
        </authorList>
    </citation>
    <scope>PHOSPHORYLATION [LARGE SCALE ANALYSIS] AT SER-1915</scope>
    <scope>IDENTIFICATION BY MASS SPECTROMETRY [LARGE SCALE ANALYSIS]</scope>
    <source>
        <tissue>Cervix carcinoma</tissue>
    </source>
</reference>
<reference key="15">
    <citation type="journal article" date="2011" name="BMC Syst. Biol.">
        <title>Initial characterization of the human central proteome.</title>
        <authorList>
            <person name="Burkard T.R."/>
            <person name="Planyavsky M."/>
            <person name="Kaupe I."/>
            <person name="Breitwieser F.P."/>
            <person name="Buerckstuemmer T."/>
            <person name="Bennett K.L."/>
            <person name="Superti-Furga G."/>
            <person name="Colinge J."/>
        </authorList>
    </citation>
    <scope>IDENTIFICATION BY MASS SPECTROMETRY [LARGE SCALE ANALYSIS]</scope>
</reference>
<reference key="16">
    <citation type="journal article" date="2013" name="J. Proteome Res.">
        <title>Toward a comprehensive characterization of a human cancer cell phosphoproteome.</title>
        <authorList>
            <person name="Zhou H."/>
            <person name="Di Palma S."/>
            <person name="Preisinger C."/>
            <person name="Peng M."/>
            <person name="Polat A.N."/>
            <person name="Heck A.J."/>
            <person name="Mohammed S."/>
        </authorList>
    </citation>
    <scope>PHOSPHORYLATION [LARGE SCALE ANALYSIS] AT SER-729 AND SER-1915</scope>
    <scope>IDENTIFICATION BY MASS SPECTROMETRY [LARGE SCALE ANALYSIS]</scope>
    <source>
        <tissue>Cervix carcinoma</tissue>
    </source>
</reference>
<reference key="17">
    <citation type="journal article" date="2014" name="FASEB J.">
        <title>Fam65b is important for formation of the HDAC6-dysferlin protein complex during myogenic cell differentiation.</title>
        <authorList>
            <person name="Balasubramanian A."/>
            <person name="Kawahara G."/>
            <person name="Gupta V.A."/>
            <person name="Rozkalne A."/>
            <person name="Beauvais A."/>
            <person name="Kunkel L.M."/>
            <person name="Gussoni E."/>
        </authorList>
    </citation>
    <scope>INTERACTION WITH RIPOR2</scope>
</reference>
<reference key="18">
    <citation type="submission" date="2006-10" db="EMBL/GenBank/DDBJ databases">
        <title>The solution structure of the first C2 domain of human myoferlin.</title>
        <authorList>
            <consortium name="RIKEN structural genomics initiative (RSGI)"/>
        </authorList>
    </citation>
    <scope>STRUCTURE BY NMR OF 1-127</scope>
</reference>
<reference key="19">
    <citation type="journal article" date="2008" name="J. Mol. Biol.">
        <title>Solution structure of the inner DysF domain of myoferlin and implications for limb girdle muscular dystrophy type 2b.</title>
        <authorList>
            <person name="Patel P."/>
            <person name="Harris R."/>
            <person name="Geddes S.M."/>
            <person name="Strehle E.-M."/>
            <person name="Watson J.D."/>
            <person name="Bashir R."/>
            <person name="Bushby K."/>
            <person name="Driscoll P.C."/>
            <person name="Keep N.H."/>
        </authorList>
    </citation>
    <scope>STRUCTURE BY NMR OF 923-1040</scope>
</reference>
<reference key="20">
    <citation type="journal article" date="2020" name="Allergy">
        <title>A myoferlin gain-of-function variant associates with a new type of hereditary angioedema.</title>
        <authorList>
            <person name="Ariano A."/>
            <person name="D'Apolito M."/>
            <person name="Bova M."/>
            <person name="Bellanti F."/>
            <person name="Loffredo S."/>
            <person name="D'Andrea G."/>
            <person name="Intrieri M."/>
            <person name="Petraroli A."/>
            <person name="Maffione A.B."/>
            <person name="Spadaro G."/>
            <person name="Santacroce R."/>
            <person name="Margaglione M."/>
        </authorList>
    </citation>
    <scope>VARIANT HAE7 SER-217</scope>
    <scope>INVOLVEMENT IN HAE7</scope>
</reference>
<gene>
    <name type="primary">MYOF</name>
    <name type="synonym">FER1L3</name>
    <name type="synonym">KIAA1207</name>
</gene>
<keyword id="KW-0002">3D-structure</keyword>
<keyword id="KW-0007">Acetylation</keyword>
<keyword id="KW-0025">Alternative splicing</keyword>
<keyword id="KW-0106">Calcium</keyword>
<keyword id="KW-1003">Cell membrane</keyword>
<keyword id="KW-0968">Cytoplasmic vesicle</keyword>
<keyword id="KW-0472">Membrane</keyword>
<keyword id="KW-0479">Metal-binding</keyword>
<keyword id="KW-0539">Nucleus</keyword>
<keyword id="KW-0597">Phosphoprotein</keyword>
<keyword id="KW-1267">Proteomics identification</keyword>
<keyword id="KW-1185">Reference proteome</keyword>
<keyword id="KW-0677">Repeat</keyword>
<keyword id="KW-0735">Signal-anchor</keyword>
<keyword id="KW-0812">Transmembrane</keyword>
<keyword id="KW-1133">Transmembrane helix</keyword>
<proteinExistence type="evidence at protein level"/>
<name>MYOF_HUMAN</name>
<evidence type="ECO:0000250" key="1"/>
<evidence type="ECO:0000250" key="2">
    <source>
        <dbReference type="UniProtKB" id="Q69ZN7"/>
    </source>
</evidence>
<evidence type="ECO:0000255" key="3"/>
<evidence type="ECO:0000255" key="4">
    <source>
        <dbReference type="PROSITE-ProRule" id="PRU00041"/>
    </source>
</evidence>
<evidence type="ECO:0000256" key="5">
    <source>
        <dbReference type="SAM" id="MobiDB-lite"/>
    </source>
</evidence>
<evidence type="ECO:0000269" key="6">
    <source>
    </source>
</evidence>
<evidence type="ECO:0000269" key="7">
    <source>
    </source>
</evidence>
<evidence type="ECO:0000269" key="8">
    <source>
    </source>
</evidence>
<evidence type="ECO:0000269" key="9">
    <source>
    </source>
</evidence>
<evidence type="ECO:0000269" key="10">
    <source>
    </source>
</evidence>
<evidence type="ECO:0000303" key="11">
    <source>
    </source>
</evidence>
<evidence type="ECO:0000303" key="12">
    <source>
    </source>
</evidence>
<evidence type="ECO:0000303" key="13">
    <source>
    </source>
</evidence>
<evidence type="ECO:0000303" key="14">
    <source>
    </source>
</evidence>
<evidence type="ECO:0000305" key="15"/>
<evidence type="ECO:0007744" key="16">
    <source>
    </source>
</evidence>
<evidence type="ECO:0007744" key="17">
    <source>
    </source>
</evidence>
<evidence type="ECO:0007744" key="18">
    <source>
    </source>
</evidence>
<evidence type="ECO:0007744" key="19">
    <source>
    </source>
</evidence>
<evidence type="ECO:0007829" key="20">
    <source>
        <dbReference type="PDB" id="2DMH"/>
    </source>
</evidence>
<evidence type="ECO:0007829" key="21">
    <source>
        <dbReference type="PDB" id="2K2O"/>
    </source>
</evidence>
<evidence type="ECO:0007829" key="22">
    <source>
        <dbReference type="PDB" id="6EEL"/>
    </source>
</evidence>
<comment type="function">
    <text evidence="1">Calcium/phospholipid-binding protein that plays a role in the plasmalemma repair mechanism of endothelial cells that permits rapid resealing of membranes disrupted by mechanical stress. Involved in endocytic recycling. Implicated in VEGF signal transduction by regulating the levels of the receptor KDR (By similarity).</text>
</comment>
<comment type="cofactor">
    <cofactor evidence="4">
        <name>Ca(2+)</name>
        <dbReference type="ChEBI" id="CHEBI:29108"/>
    </cofactor>
    <text evidence="1">Binds Ca(2+). The ions are bound to the C2 1 domain.</text>
</comment>
<comment type="subunit">
    <text evidence="2 8 9">Interacts with DNM2 and KDR. Interacts with EHD1 (By similarity). Interacts with EHD2; the interaction is direct (PubMed:18502764). Interacts with RIPOR2 (PubMed:24687993).</text>
</comment>
<comment type="subcellular location">
    <subcellularLocation>
        <location>Cell membrane</location>
        <topology>Single-pass type II membrane protein</topology>
    </subcellularLocation>
    <subcellularLocation>
        <location>Nucleus membrane</location>
        <topology>Single-pass type II membrane protein</topology>
    </subcellularLocation>
    <subcellularLocation>
        <location>Cytoplasmic vesicle membrane</location>
        <topology>Single-pass type II membrane protein</topology>
    </subcellularLocation>
    <text evidence="1">Concentrated at the membrane sites of both myoblast-myoblast and myoblast-myotube fusions. Detected at the plasmalemma in endothelial cells lining intact blood vessels (By similarity). Found at nuclear and plasma membranes. Enriched in undifferentiated myoblasts near the plasma membrane in puncate structures.</text>
</comment>
<comment type="alternative products">
    <event type="alternative splicing"/>
    <isoform>
        <id>Q9NZM1-1</id>
        <name>1</name>
        <sequence type="displayed"/>
    </isoform>
    <isoform>
        <id>Q9NZM1-2</id>
        <name>2</name>
        <sequence type="described" ref="VSP_001515"/>
    </isoform>
    <isoform>
        <id>Q9NZM1-3</id>
        <name>3</name>
        <sequence type="described" ref="VSP_001516 VSP_001517"/>
    </isoform>
    <isoform>
        <id>Q9NZM1-4</id>
        <name>4</name>
        <sequence type="described" ref="VSP_023797 VSP_023798"/>
    </isoform>
    <isoform>
        <id>Q9NZM1-5</id>
        <name>5</name>
        <sequence type="described" ref="VSP_023802"/>
    </isoform>
    <isoform>
        <id>Q9NZM1-6</id>
        <name>6</name>
        <sequence type="described" ref="VSP_023801"/>
    </isoform>
    <isoform>
        <id>Q9NZM1-7</id>
        <name>7</name>
        <sequence type="described" ref="VSP_023800"/>
    </isoform>
    <isoform>
        <id>Q9NZM1-8</id>
        <name>8</name>
        <sequence type="described" ref="VSP_023796 VSP_023799"/>
    </isoform>
</comment>
<comment type="tissue specificity">
    <text evidence="6 7 8">Expressed in myoblast and endothelial cells (at protein level). Highly expressed in cardiac and skeletal muscles. Also present in lung, and at very low levels in kidney, placenta and brain.</text>
</comment>
<comment type="domain">
    <text>The C2 domain 1 associates with lipid membranes in a calcium-dependent manner.</text>
</comment>
<comment type="disease" evidence="10">
    <disease id="DI-06127">
        <name>Angioedema, hereditary, 7</name>
        <acronym>HAE7</acronym>
        <description>A form of angioedema, a disorder characterized by episodic local swelling involving subcutaneous or submucous tissue of the upper respiratory and gastrointestinal tracts, face, extremities, and genitalia. HAE7 is an autosomal dominant form characterized by onset of recurrent swelling of the face, lips, and oral mucosa in the second decade.</description>
        <dbReference type="MIM" id="619366"/>
    </disease>
    <text>The disease may be caused by variants affecting the gene represented in this entry.</text>
</comment>
<comment type="similarity">
    <text evidence="15">Belongs to the ferlin family.</text>
</comment>
<comment type="sequence caution" evidence="15">
    <conflict type="miscellaneous discrepancy">
        <sequence resource="EMBL-CDS" id="AAH40110"/>
    </conflict>
    <text>Contaminating sequence. Potential poly-A sequence.</text>
</comment>
<comment type="sequence caution" evidence="15">
    <conflict type="erroneous initiation">
        <sequence resource="EMBL-CDS" id="BAG52097"/>
    </conflict>
    <text>Truncated N-terminus.</text>
</comment>
<accession>Q9NZM1</accession>
<accession>B3KQN5</accession>
<accession>Q5VWW2</accession>
<accession>Q5VWW3</accession>
<accession>Q5VWW4</accession>
<accession>Q5VWW5</accession>
<accession>Q7Z642</accession>
<accession>Q8IWH0</accession>
<accession>Q9HBU3</accession>
<accession>Q9NZM0</accession>
<accession>Q9ULL3</accession>
<accession>Q9Y4U4</accession>
<protein>
    <recommendedName>
        <fullName>Myoferlin</fullName>
    </recommendedName>
    <alternativeName>
        <fullName>Fer-1-like protein 3</fullName>
    </alternativeName>
</protein>
<feature type="chain" id="PRO_0000057884" description="Myoferlin">
    <location>
        <begin position="1"/>
        <end position="2061"/>
    </location>
</feature>
<feature type="topological domain" description="Cytoplasmic" evidence="3">
    <location>
        <begin position="1"/>
        <end position="2025"/>
    </location>
</feature>
<feature type="transmembrane region" description="Helical" evidence="3">
    <location>
        <begin position="2026"/>
        <end position="2046"/>
    </location>
</feature>
<feature type="topological domain" description="Extracellular" evidence="3">
    <location>
        <begin position="2047"/>
        <end position="2061"/>
    </location>
</feature>
<feature type="domain" description="C2 1" evidence="4">
    <location>
        <begin position="1"/>
        <end position="101"/>
    </location>
</feature>
<feature type="domain" description="C2 2" evidence="4">
    <location>
        <begin position="181"/>
        <end position="300"/>
    </location>
</feature>
<feature type="domain" description="C2 3" evidence="4">
    <location>
        <begin position="339"/>
        <end position="474"/>
    </location>
</feature>
<feature type="domain" description="C2 4" evidence="4">
    <location>
        <begin position="1123"/>
        <end position="1251"/>
    </location>
</feature>
<feature type="domain" description="C2 5" evidence="4">
    <location>
        <begin position="1282"/>
        <end position="1410"/>
    </location>
</feature>
<feature type="domain" description="C2 6" evidence="4">
    <location>
        <begin position="1536"/>
        <end position="1654"/>
    </location>
</feature>
<feature type="domain" description="C2 7" evidence="4">
    <location>
        <begin position="1772"/>
        <end position="1920"/>
    </location>
</feature>
<feature type="region of interest" description="Disordered" evidence="5">
    <location>
        <begin position="123"/>
        <end position="172"/>
    </location>
</feature>
<feature type="region of interest" description="Necessary for interaction with EHD2" evidence="8">
    <location>
        <begin position="186"/>
        <end position="281"/>
    </location>
</feature>
<feature type="region of interest" description="Disordered" evidence="5">
    <location>
        <begin position="323"/>
        <end position="342"/>
    </location>
</feature>
<feature type="region of interest" description="Disordered" evidence="5">
    <location>
        <begin position="938"/>
        <end position="967"/>
    </location>
</feature>
<feature type="compositionally biased region" description="Acidic residues" evidence="5">
    <location>
        <begin position="146"/>
        <end position="156"/>
    </location>
</feature>
<feature type="binding site" evidence="4">
    <location>
        <position position="390"/>
    </location>
    <ligand>
        <name>Ca(2+)</name>
        <dbReference type="ChEBI" id="CHEBI:29108"/>
        <label>1</label>
    </ligand>
</feature>
<feature type="binding site" evidence="4">
    <location>
        <position position="390"/>
    </location>
    <ligand>
        <name>Ca(2+)</name>
        <dbReference type="ChEBI" id="CHEBI:29108"/>
        <label>2</label>
    </ligand>
</feature>
<feature type="binding site" evidence="4">
    <location>
        <position position="396"/>
    </location>
    <ligand>
        <name>Ca(2+)</name>
        <dbReference type="ChEBI" id="CHEBI:29108"/>
        <label>1</label>
    </ligand>
</feature>
<feature type="binding site" evidence="4">
    <location>
        <position position="444"/>
    </location>
    <ligand>
        <name>Ca(2+)</name>
        <dbReference type="ChEBI" id="CHEBI:29108"/>
        <label>1</label>
    </ligand>
</feature>
<feature type="binding site" evidence="4">
    <location>
        <position position="444"/>
    </location>
    <ligand>
        <name>Ca(2+)</name>
        <dbReference type="ChEBI" id="CHEBI:29108"/>
        <label>2</label>
    </ligand>
</feature>
<feature type="binding site" evidence="4">
    <location>
        <position position="446"/>
    </location>
    <ligand>
        <name>Ca(2+)</name>
        <dbReference type="ChEBI" id="CHEBI:29108"/>
        <label>1</label>
    </ligand>
</feature>
<feature type="binding site" evidence="4">
    <location>
        <position position="446"/>
    </location>
    <ligand>
        <name>Ca(2+)</name>
        <dbReference type="ChEBI" id="CHEBI:29108"/>
        <label>2</label>
    </ligand>
</feature>
<feature type="binding site" evidence="4">
    <location>
        <position position="452"/>
    </location>
    <ligand>
        <name>Ca(2+)</name>
        <dbReference type="ChEBI" id="CHEBI:29108"/>
        <label>2</label>
    </ligand>
</feature>
<feature type="binding site" evidence="4">
    <location>
        <position position="1155"/>
    </location>
    <ligand>
        <name>Ca(2+)</name>
        <dbReference type="ChEBI" id="CHEBI:29108"/>
        <label>3</label>
    </ligand>
</feature>
<feature type="binding site" evidence="4">
    <location>
        <position position="1161"/>
    </location>
    <ligand>
        <name>Ca(2+)</name>
        <dbReference type="ChEBI" id="CHEBI:29108"/>
        <label>3</label>
    </ligand>
</feature>
<feature type="binding site" evidence="4">
    <location>
        <position position="1217"/>
    </location>
    <ligand>
        <name>Ca(2+)</name>
        <dbReference type="ChEBI" id="CHEBI:29108"/>
        <label>3</label>
    </ligand>
</feature>
<feature type="binding site" evidence="4">
    <location>
        <position position="1219"/>
    </location>
    <ligand>
        <name>Ca(2+)</name>
        <dbReference type="ChEBI" id="CHEBI:29108"/>
        <label>3</label>
    </ligand>
</feature>
<feature type="binding site" evidence="4">
    <location>
        <position position="1569"/>
    </location>
    <ligand>
        <name>Ca(2+)</name>
        <dbReference type="ChEBI" id="CHEBI:29108"/>
        <label>4</label>
    </ligand>
</feature>
<feature type="binding site" evidence="4">
    <location>
        <position position="1575"/>
    </location>
    <ligand>
        <name>Ca(2+)</name>
        <dbReference type="ChEBI" id="CHEBI:29108"/>
        <label>4</label>
    </ligand>
</feature>
<feature type="binding site" evidence="4">
    <location>
        <position position="1624"/>
    </location>
    <ligand>
        <name>Ca(2+)</name>
        <dbReference type="ChEBI" id="CHEBI:29108"/>
        <label>4</label>
    </ligand>
</feature>
<feature type="binding site" evidence="4">
    <location>
        <position position="1626"/>
    </location>
    <ligand>
        <name>Ca(2+)</name>
        <dbReference type="ChEBI" id="CHEBI:29108"/>
        <label>4</label>
    </ligand>
</feature>
<feature type="binding site" evidence="4">
    <location>
        <position position="1891"/>
    </location>
    <ligand>
        <name>Ca(2+)</name>
        <dbReference type="ChEBI" id="CHEBI:29108"/>
        <label>5</label>
    </ligand>
</feature>
<feature type="binding site" evidence="4">
    <location>
        <position position="1894"/>
    </location>
    <ligand>
        <name>Ca(2+)</name>
        <dbReference type="ChEBI" id="CHEBI:29108"/>
        <label>5</label>
    </ligand>
</feature>
<feature type="binding site" evidence="4">
    <location>
        <position position="1897"/>
    </location>
    <ligand>
        <name>Ca(2+)</name>
        <dbReference type="ChEBI" id="CHEBI:29108"/>
        <label>5</label>
    </ligand>
</feature>
<feature type="modified residue" description="Phosphoserine" evidence="16">
    <location>
        <position position="174"/>
    </location>
</feature>
<feature type="modified residue" description="N6-acetyllysine" evidence="2">
    <location>
        <position position="553"/>
    </location>
</feature>
<feature type="modified residue" description="Phosphoserine" evidence="19">
    <location>
        <position position="729"/>
    </location>
</feature>
<feature type="modified residue" description="N6-acetyllysine" evidence="17">
    <location>
        <position position="884"/>
    </location>
</feature>
<feature type="modified residue" description="N6-acetyllysine" evidence="2">
    <location>
        <position position="1507"/>
    </location>
</feature>
<feature type="modified residue" description="Phosphoserine" evidence="18 19">
    <location>
        <position position="1915"/>
    </location>
</feature>
<feature type="splice variant" id="VSP_001515" description="In isoform 2." evidence="11">
    <original>MLRVIVESASNIPKTKFGKPDPIVSVIFKDEKKKTKKVDNELNPVWNEILEFDLRGIPLDFSSSLGIIVKDFETIGQNKLIGTATVA</original>
    <variation>MRPPKEGSGSNICCSAIFAVLQPPLVISRQTRSGMDLQQTPTDLQ</variation>
    <location>
        <begin position="1"/>
        <end position="87"/>
    </location>
</feature>
<feature type="splice variant" id="VSP_023796" description="In isoform 8." evidence="13">
    <original>MLRVIVESASNIPKTKFGKPDPIVSVIFK</original>
    <variation>MIPPNSPPNRT</variation>
    <location>
        <begin position="1"/>
        <end position="29"/>
    </location>
</feature>
<feature type="splice variant" id="VSP_023797" description="In isoform 4." evidence="15">
    <original>DGEEDEGDEDRLDNA</original>
    <variation>KLTLLKAQPPPGGGC</variation>
    <location>
        <begin position="146"/>
        <end position="160"/>
    </location>
</feature>
<feature type="splice variant" id="VSP_023798" description="In isoform 4." evidence="15">
    <location>
        <begin position="161"/>
        <end position="2061"/>
    </location>
</feature>
<feature type="splice variant" id="VSP_023799" description="In isoform 8." evidence="13">
    <location>
        <begin position="438"/>
        <end position="2061"/>
    </location>
</feature>
<feature type="splice variant" id="VSP_023800" description="In isoform 7." evidence="15">
    <location>
        <begin position="446"/>
        <end position="2061"/>
    </location>
</feature>
<feature type="splice variant" id="VSP_023801" description="In isoform 6." evidence="12">
    <location>
        <begin position="473"/>
        <end position="485"/>
    </location>
</feature>
<feature type="splice variant" id="VSP_023802" description="In isoform 5." evidence="13">
    <location>
        <begin position="1224"/>
        <end position="1707"/>
    </location>
</feature>
<feature type="splice variant" id="VSP_001516" description="In isoform 3." evidence="14">
    <original>K</original>
    <variation>KCLSSMSTALSKMASPATVH</variation>
    <location>
        <position position="1442"/>
    </location>
</feature>
<feature type="splice variant" id="VSP_001517" description="In isoform 3." evidence="14">
    <original>QGKLQMWVDVFPKSLGPPGPPFNITPRKAKK</original>
    <variation>R</variation>
    <location>
        <begin position="1757"/>
        <end position="1787"/>
    </location>
</feature>
<feature type="sequence variant" id="VAR_085819" description="In HAE7; uncertain significance; dbSNP:rs1256778304." evidence="10">
    <original>R</original>
    <variation>S</variation>
    <location>
        <position position="217"/>
    </location>
</feature>
<feature type="sequence variant" id="VAR_049058" description="In dbSNP:rs36032890.">
    <original>V</original>
    <variation>I</variation>
    <location>
        <position position="1136"/>
    </location>
</feature>
<feature type="sequence variant" id="VAR_031250" description="In dbSNP:rs12256834.">
    <original>Y</original>
    <variation>F</variation>
    <location>
        <position position="1198"/>
    </location>
</feature>
<feature type="sequence variant" id="VAR_031251" description="In dbSNP:rs11187393.">
    <original>R</original>
    <variation>C</variation>
    <location>
        <position position="1399"/>
    </location>
</feature>
<feature type="sequence variant" id="VAR_049059" description="In dbSNP:rs34000599.">
    <original>G</original>
    <variation>A</variation>
    <location>
        <position position="1701"/>
    </location>
</feature>
<feature type="sequence variant" id="VAR_031252" description="In dbSNP:rs11594445.">
    <original>R</original>
    <variation>Q</variation>
    <location>
        <position position="1783"/>
    </location>
</feature>
<feature type="mutagenesis site" description="Reduces interaction with EHD2." evidence="8">
    <original>NPF</original>
    <variation>SPL</variation>
    <location>
        <begin position="238"/>
        <end position="240"/>
    </location>
</feature>
<feature type="sequence conflict" description="In Ref. 2; AAG23737." evidence="15" ref="2">
    <original>M</original>
    <variation>T</variation>
    <location>
        <position position="251"/>
    </location>
</feature>
<feature type="sequence conflict" description="In Ref. 7; CAB46370." evidence="15" ref="7">
    <original>R</original>
    <variation>W</variation>
    <location>
        <position position="621"/>
    </location>
</feature>
<feature type="sequence conflict" description="In Ref. 2; AAG23737 and 7; CAB46370." evidence="15" ref="2 7">
    <original>T</original>
    <variation>A</variation>
    <location>
        <position position="659"/>
    </location>
</feature>
<feature type="sequence conflict" description="In Ref. 1; AAF27177." evidence="15" ref="1">
    <original>E</original>
    <variation>A</variation>
    <location>
        <position position="846"/>
    </location>
</feature>
<feature type="sequence conflict" description="In Ref. 7; CAB46370." evidence="15" ref="7">
    <original>V</original>
    <variation>D</variation>
    <location>
        <position position="1136"/>
    </location>
</feature>
<feature type="sequence conflict" description="In Ref. 7; CAB46370." evidence="15" ref="7">
    <original>Y</original>
    <variation>F</variation>
    <location>
        <position position="1163"/>
    </location>
</feature>
<feature type="sequence conflict" description="In Ref. 2; AAG23737 and 7; CAB46370." evidence="15" ref="2 7">
    <original>E</original>
    <variation>G</variation>
    <location>
        <position position="1544"/>
    </location>
</feature>
<feature type="sequence conflict" description="In Ref. 7; CAB46370." evidence="15" ref="7">
    <original>C</original>
    <variation>R</variation>
    <location>
        <position position="1574"/>
    </location>
</feature>
<feature type="sequence conflict" description="In Ref. 1; AAF27177." evidence="15" ref="1">
    <original>P</original>
    <variation>H</variation>
    <location>
        <position position="1723"/>
    </location>
</feature>
<feature type="sequence conflict" description="In Ref. 7; CAB46370." evidence="15" ref="7">
    <original>H</original>
    <variation>R</variation>
    <location>
        <position position="1834"/>
    </location>
</feature>
<feature type="sequence conflict" description="In Ref. 1; AAF27177." evidence="15" ref="1">
    <original>MKGWWPC</original>
    <variation>IRMVAM</variation>
    <location>
        <begin position="1946"/>
        <end position="1952"/>
    </location>
</feature>
<feature type="strand" evidence="22">
    <location>
        <begin position="1"/>
        <end position="10"/>
    </location>
</feature>
<feature type="strand" evidence="22">
    <location>
        <begin position="16"/>
        <end position="18"/>
    </location>
</feature>
<feature type="strand" evidence="22">
    <location>
        <begin position="22"/>
        <end position="28"/>
    </location>
</feature>
<feature type="strand" evidence="22">
    <location>
        <begin position="31"/>
        <end position="34"/>
    </location>
</feature>
<feature type="strand" evidence="22">
    <location>
        <begin position="45"/>
        <end position="53"/>
    </location>
</feature>
<feature type="strand" evidence="22">
    <location>
        <begin position="64"/>
        <end position="71"/>
    </location>
</feature>
<feature type="strand" evidence="22">
    <location>
        <begin position="74"/>
        <end position="77"/>
    </location>
</feature>
<feature type="strand" evidence="22">
    <location>
        <begin position="79"/>
        <end position="87"/>
    </location>
</feature>
<feature type="helix" evidence="22">
    <location>
        <begin position="89"/>
        <end position="91"/>
    </location>
</feature>
<feature type="strand" evidence="20">
    <location>
        <begin position="93"/>
        <end position="95"/>
    </location>
</feature>
<feature type="strand" evidence="22">
    <location>
        <begin position="97"/>
        <end position="107"/>
    </location>
</feature>
<feature type="strand" evidence="22">
    <location>
        <begin position="113"/>
        <end position="124"/>
    </location>
</feature>
<feature type="turn" evidence="21">
    <location>
        <begin position="924"/>
        <end position="927"/>
    </location>
</feature>
<feature type="strand" evidence="21">
    <location>
        <begin position="929"/>
        <end position="939"/>
    </location>
</feature>
<feature type="strand" evidence="21">
    <location>
        <begin position="942"/>
        <end position="944"/>
    </location>
</feature>
<feature type="strand" evidence="21">
    <location>
        <begin position="947"/>
        <end position="954"/>
    </location>
</feature>
<feature type="turn" evidence="21">
    <location>
        <begin position="964"/>
        <end position="966"/>
    </location>
</feature>
<feature type="strand" evidence="21">
    <location>
        <begin position="977"/>
        <end position="979"/>
    </location>
</feature>
<feature type="strand" evidence="21">
    <location>
        <begin position="985"/>
        <end position="987"/>
    </location>
</feature>
<feature type="strand" evidence="21">
    <location>
        <begin position="994"/>
        <end position="996"/>
    </location>
</feature>
<feature type="strand" evidence="21">
    <location>
        <begin position="1017"/>
        <end position="1028"/>
    </location>
</feature>
<feature type="turn" evidence="21">
    <location>
        <begin position="1030"/>
        <end position="1034"/>
    </location>
</feature>
<organism>
    <name type="scientific">Homo sapiens</name>
    <name type="common">Human</name>
    <dbReference type="NCBI Taxonomy" id="9606"/>
    <lineage>
        <taxon>Eukaryota</taxon>
        <taxon>Metazoa</taxon>
        <taxon>Chordata</taxon>
        <taxon>Craniata</taxon>
        <taxon>Vertebrata</taxon>
        <taxon>Euteleostomi</taxon>
        <taxon>Mammalia</taxon>
        <taxon>Eutheria</taxon>
        <taxon>Euarchontoglires</taxon>
        <taxon>Primates</taxon>
        <taxon>Haplorrhini</taxon>
        <taxon>Catarrhini</taxon>
        <taxon>Hominidae</taxon>
        <taxon>Homo</taxon>
    </lineage>
</organism>
<sequence>MLRVIVESASNIPKTKFGKPDPIVSVIFKDEKKKTKKVDNELNPVWNEILEFDLRGIPLDFSSSLGIIVKDFETIGQNKLIGTATVALKDLTGDQSRSLPYKLISLLNEKGQDTGATIDLVIGYDPPSAPHPNDLSGPSVPGMGGDGEEDEGDEDRLDNAVRGPGPKGPVGTVSEAQLARRLTKVKNSRRMLSNKPQDFQIRVRVIEGRQLSGNNIRPVVKVHVCGQTHRTRIKRGNNPFFDELFFYNVNMTPSELMDEIISIRVYNSHSLRADCLMGEFKIDVGFVYDEPGHAVMRKWLLLNDPEDTSSGSKGYMKVSMFVLGTGDEPPPERRDRDNDSDDVESNLLLPAGIALRWVTFLLKIYRAEDIPQMDDAFSQTVKEIFGGNADKKNLVDPFVEVSFAGKKVCTNIIEKNANPEWNQVVNLQIKFPSVCEKIKLTIYDWDRLTKNDVVGTTYLHLSKIAASGGEVEDFSSSGTGAASYTVNTGETEVGFVPTFGPCYLNLYGSPREYTGFPDPYDELNTGKGEGVAYRGRILVELATFLEKTPPDKKLEPISNDDLLVVEKYQRRRKYSLSAVFHSATMLQDVGEAIQFEVSIGNYGNKFDTTCKPLASTTQYSRAVFDGNYYYYLPWAHTKPVVTLTSYWEDISHRLDAVNTLLAMAERLQTNIEALKSGIQGKIPANQLAELWLKLIDEVIEDTRYTLPLTEGKANVTVLDTQIRKLRSRSLSQIHEAAVRMRSEATDVKSTLAEIEDWLDKLMQLTEEPQNSMPDIIIWMIRGEKRLAYARIPAHQVLYSTSGENASGKYCGKTQTIFLKYPQEKNNGPKVPVELRVNIWLGLSAVEKKFNSFAEGTFTVFAEMYENQALMFGKWGTSGLVGRHKFSDVTGKIKLKREFFLPPKGWEWEGEWIVDPERSLLTEADAGHTEFTDEVYQNESRYPGGDWKPAEDTYTDANGDKAASPSELTCPPGWEWEDDAWSYDINRAVDEKGWEYGITIPPDHKPKSWVAAEKMYHTHRRRRLVRKRKKDLTQTASSTARAMEELQDQEGWEYASLIGWKFHWKQRSSDTFRRRRWRRKMAPSETHGAAAIFKLEGALGADTTEDGDEKSLEKQKHSATTVFGANTPIVSCNFDRVYIYHLRCYVYQARNLLALDKDSFSDPYAHICFLHRSKTTEIIHSTLNPTWDQTIIFDEVEIYGEPQTVLQNPPKVIMELFDNDQVGKDEFLGRSIFSPVVKLNSEMDITPKLLWHPVMNGDKACGDVLVTAELILRGKDGSNLPILPPQRAPNLYMVPQGIRPVVQLTAIEILAWGLRNMKNFQMASITSPSLVVECGGERVESVVIKNLKKTPNFPSSVLFMKVFLPKEELYMPPLVIKVIDHRQFGRKPVVGQCTIERLDRFRCDPYAGKEDIVPQLKASLLSAPPCRDIVIEMEDTKPLLASKLTEKEEEIVDWWSKFYASSGEHEKCGQYIQKGYSKLKIYNCELENVAEFEGLTDFSDTFKLYRGKSDENEDPSVVGEFKGSFRIYPLPDDPSVPAPPRQFRELPDSVPQECTVRIYIVRGLELQPQDNNGLCDPYIKITLGKKVIEDRDHYIPNTLNPVFGRMYELSCYLPQEKDLKISVYDYDTFTRDEKVGETIIDLENRFLSRFGSHCGIPEEYCVSGVNTWRDQLRPTQLLQNVARFKGFPQPILSEDGSRIRYGGRDYSLDEFEANKILHQHLGAPEERLALHILRTQGLVPEHVETRTLHSTFQPNISQGKLQMWVDVFPKSLGPPGPPFNITPRKAKKYYLRVIIWNTKDVILDEKSITGEEMSDIYVKGWIPGNEENKQKTDVHYRSLDGEGNFNWRFVFPFDYLPAEQLCIVAKKEHFWSIDQTEFRIPPRLIIQIWDNDKFSLDDYLGFLELDLRHTIIPAKSPEKCRLDMIPDLKAMNPLKAKTASLFEQKSMKGWWPCYAEKDGARVMAGKVEMTLEILNEKEADERPAGKGRDEPNMNPKLDLPNRPETSFLWFTNPCKTMKFIVWRRFKWVIIGLLFLLILLLFVAVLLYSLPNYLSMKIVKPNV</sequence>